<keyword id="KW-1003">Cell membrane</keyword>
<keyword id="KW-0472">Membrane</keyword>
<keyword id="KW-1185">Reference proteome</keyword>
<keyword id="KW-0812">Transmembrane</keyword>
<keyword id="KW-1133">Transmembrane helix</keyword>
<name>Y2180_CROS8</name>
<comment type="subcellular location">
    <subcellularLocation>
        <location evidence="1">Cell membrane</location>
        <topology evidence="1">Multi-pass membrane protein</topology>
    </subcellularLocation>
</comment>
<comment type="similarity">
    <text evidence="1">Belongs to the UPF0756 family.</text>
</comment>
<dbReference type="EMBL" id="CP000783">
    <property type="protein sequence ID" value="ABU77429.1"/>
    <property type="molecule type" value="Genomic_DNA"/>
</dbReference>
<dbReference type="RefSeq" id="WP_004386633.1">
    <property type="nucleotide sequence ID" value="NC_009778.1"/>
</dbReference>
<dbReference type="KEGG" id="esa:ESA_02180"/>
<dbReference type="HOGENOM" id="CLU_125889_0_0_6"/>
<dbReference type="Proteomes" id="UP000000260">
    <property type="component" value="Chromosome"/>
</dbReference>
<dbReference type="GO" id="GO:0005886">
    <property type="term" value="C:plasma membrane"/>
    <property type="evidence" value="ECO:0007669"/>
    <property type="project" value="UniProtKB-SubCell"/>
</dbReference>
<dbReference type="HAMAP" id="MF_01874">
    <property type="entry name" value="UPF0756"/>
    <property type="match status" value="1"/>
</dbReference>
<dbReference type="InterPro" id="IPR007382">
    <property type="entry name" value="UPF0756_TM"/>
</dbReference>
<dbReference type="PANTHER" id="PTHR38452">
    <property type="entry name" value="UPF0756 MEMBRANE PROTEIN YEAL"/>
    <property type="match status" value="1"/>
</dbReference>
<dbReference type="PANTHER" id="PTHR38452:SF1">
    <property type="entry name" value="UPF0756 MEMBRANE PROTEIN YEAL"/>
    <property type="match status" value="1"/>
</dbReference>
<dbReference type="Pfam" id="PF04284">
    <property type="entry name" value="DUF441"/>
    <property type="match status" value="1"/>
</dbReference>
<proteinExistence type="inferred from homology"/>
<accession>A7MN87</accession>
<sequence length="148" mass="15314">MFDITLLILLALAGLGFVSHNMAVTVSVLVLIVIRMTPLSAWFPWVEKQGVTVGIIILTISVMAPIASGTLPTSTLFHAFLNWKSLVAIAVGVFVSWLGGKGVALMGSQPSIVAGLLVGTVLGVALFRGVPVGPLIAAGLVSLLIGRQ</sequence>
<evidence type="ECO:0000255" key="1">
    <source>
        <dbReference type="HAMAP-Rule" id="MF_01874"/>
    </source>
</evidence>
<feature type="chain" id="PRO_0000388849" description="UPF0756 membrane protein ESA_02180">
    <location>
        <begin position="1"/>
        <end position="148"/>
    </location>
</feature>
<feature type="transmembrane region" description="Helical" evidence="1">
    <location>
        <begin position="4"/>
        <end position="24"/>
    </location>
</feature>
<feature type="transmembrane region" description="Helical" evidence="1">
    <location>
        <begin position="51"/>
        <end position="71"/>
    </location>
</feature>
<feature type="transmembrane region" description="Helical" evidence="1">
    <location>
        <begin position="86"/>
        <end position="106"/>
    </location>
</feature>
<feature type="transmembrane region" description="Helical" evidence="1">
    <location>
        <begin position="112"/>
        <end position="132"/>
    </location>
</feature>
<gene>
    <name type="ordered locus">ESA_02180</name>
</gene>
<protein>
    <recommendedName>
        <fullName evidence="1">UPF0756 membrane protein ESA_02180</fullName>
    </recommendedName>
</protein>
<reference key="1">
    <citation type="journal article" date="2010" name="PLoS ONE">
        <title>Genome sequence of Cronobacter sakazakii BAA-894 and comparative genomic hybridization analysis with other Cronobacter species.</title>
        <authorList>
            <person name="Kucerova E."/>
            <person name="Clifton S.W."/>
            <person name="Xia X.Q."/>
            <person name="Long F."/>
            <person name="Porwollik S."/>
            <person name="Fulton L."/>
            <person name="Fronick C."/>
            <person name="Minx P."/>
            <person name="Kyung K."/>
            <person name="Warren W."/>
            <person name="Fulton R."/>
            <person name="Feng D."/>
            <person name="Wollam A."/>
            <person name="Shah N."/>
            <person name="Bhonagiri V."/>
            <person name="Nash W.E."/>
            <person name="Hallsworth-Pepin K."/>
            <person name="Wilson R.K."/>
            <person name="McClelland M."/>
            <person name="Forsythe S.J."/>
        </authorList>
    </citation>
    <scope>NUCLEOTIDE SEQUENCE [LARGE SCALE GENOMIC DNA]</scope>
    <source>
        <strain>ATCC BAA-894</strain>
    </source>
</reference>
<organism>
    <name type="scientific">Cronobacter sakazakii (strain ATCC BAA-894)</name>
    <name type="common">Enterobacter sakazakii</name>
    <dbReference type="NCBI Taxonomy" id="290339"/>
    <lineage>
        <taxon>Bacteria</taxon>
        <taxon>Pseudomonadati</taxon>
        <taxon>Pseudomonadota</taxon>
        <taxon>Gammaproteobacteria</taxon>
        <taxon>Enterobacterales</taxon>
        <taxon>Enterobacteriaceae</taxon>
        <taxon>Cronobacter</taxon>
    </lineage>
</organism>